<sequence length="662" mass="75243">MNFPWDQLLVKGNWMITMAQIGAPFLVIGLIAVITYFKLWKYLYKEWFTSVDHKKIGIMYLICAVLMFVRGGIDALLIRAQLTVPDNKFLESNHYNEIFSTHGVIMIIFMAMPFIFGLWNIVVPLQIGARDVAFPVLNNVSFWLFFAGMILFNLSFIIGGSPAAGWTNYAPLAGEFSPGPGVNYYLIAIQISGLGTLATGINFFVTILRCKTPTMKFMQMPMFTVTTFITTLIVILAFPPLTVALALMTTDRIFDTAFFTVAHGGMPMLWANFFWVWGHPEVYIVILPAFGIYSEIIPTFARKRLFGHQSMVWATAGIAFLSFLVWVHHFFTMGNGALINSFFSISTMLIGIPTGVKLFNWLLTLYKGRITFESPMLFSLAFIPNFLLGGVTGVMLAMASADYQYHNTYFLVAHFHYTLVTGVVFACLAGLIFWYPKMMGYKLNETLNKWCFWFFMIGFNVCFLPQFILGLDGMPRRLYTYMPSDGWFLLNLISTIGALLMAIGFLFLVVSIVYSHFKSPREATGDNWDGLGRTLEWTTASAIPPKYNFAITPDWNDYDTFVDMKEHGRHYLDNHNYKDIHMPNNTPVGFWIGIFMTIGGFFLIFETVIPALICLFGIFGTMIYRSFQIDHGYHIPAAEVAETEARLREARIKEREAVSHES</sequence>
<gene>
    <name type="primary">qoxB</name>
    <name type="ordered locus">SAS0995</name>
</gene>
<evidence type="ECO:0000250" key="1"/>
<evidence type="ECO:0000255" key="2"/>
<evidence type="ECO:0000305" key="3"/>
<keyword id="KW-1003">Cell membrane</keyword>
<keyword id="KW-0186">Copper</keyword>
<keyword id="KW-0249">Electron transport</keyword>
<keyword id="KW-0349">Heme</keyword>
<keyword id="KW-0375">Hydrogen ion transport</keyword>
<keyword id="KW-0406">Ion transport</keyword>
<keyword id="KW-0408">Iron</keyword>
<keyword id="KW-0472">Membrane</keyword>
<keyword id="KW-0479">Metal-binding</keyword>
<keyword id="KW-0560">Oxidoreductase</keyword>
<keyword id="KW-0679">Respiratory chain</keyword>
<keyword id="KW-0812">Transmembrane</keyword>
<keyword id="KW-1133">Transmembrane helix</keyword>
<keyword id="KW-0813">Transport</keyword>
<organism>
    <name type="scientific">Staphylococcus aureus (strain MSSA476)</name>
    <dbReference type="NCBI Taxonomy" id="282459"/>
    <lineage>
        <taxon>Bacteria</taxon>
        <taxon>Bacillati</taxon>
        <taxon>Bacillota</taxon>
        <taxon>Bacilli</taxon>
        <taxon>Bacillales</taxon>
        <taxon>Staphylococcaceae</taxon>
        <taxon>Staphylococcus</taxon>
    </lineage>
</organism>
<protein>
    <recommendedName>
        <fullName>Probable quinol oxidase subunit 1</fullName>
        <ecNumber>1.10.3.-</ecNumber>
    </recommendedName>
    <alternativeName>
        <fullName>Quinol oxidase polypeptide I</fullName>
    </alternativeName>
</protein>
<proteinExistence type="inferred from homology"/>
<dbReference type="EC" id="1.10.3.-"/>
<dbReference type="EMBL" id="BX571857">
    <property type="protein sequence ID" value="CAG42770.1"/>
    <property type="molecule type" value="Genomic_DNA"/>
</dbReference>
<dbReference type="RefSeq" id="WP_001010762.1">
    <property type="nucleotide sequence ID" value="NC_002953.3"/>
</dbReference>
<dbReference type="SMR" id="Q6GAF3"/>
<dbReference type="KEGG" id="sas:SAS0995"/>
<dbReference type="HOGENOM" id="CLU_011899_7_1_9"/>
<dbReference type="UniPathway" id="UPA00705"/>
<dbReference type="GO" id="GO:0005886">
    <property type="term" value="C:plasma membrane"/>
    <property type="evidence" value="ECO:0007669"/>
    <property type="project" value="UniProtKB-SubCell"/>
</dbReference>
<dbReference type="GO" id="GO:0005507">
    <property type="term" value="F:copper ion binding"/>
    <property type="evidence" value="ECO:0007669"/>
    <property type="project" value="InterPro"/>
</dbReference>
<dbReference type="GO" id="GO:0004129">
    <property type="term" value="F:cytochrome-c oxidase activity"/>
    <property type="evidence" value="ECO:0007669"/>
    <property type="project" value="InterPro"/>
</dbReference>
<dbReference type="GO" id="GO:0020037">
    <property type="term" value="F:heme binding"/>
    <property type="evidence" value="ECO:0007669"/>
    <property type="project" value="InterPro"/>
</dbReference>
<dbReference type="GO" id="GO:0016682">
    <property type="term" value="F:oxidoreductase activity, acting on diphenols and related substances as donors, oxygen as acceptor"/>
    <property type="evidence" value="ECO:0007669"/>
    <property type="project" value="InterPro"/>
</dbReference>
<dbReference type="GO" id="GO:0015990">
    <property type="term" value="P:electron transport coupled proton transport"/>
    <property type="evidence" value="ECO:0007669"/>
    <property type="project" value="TreeGrafter"/>
</dbReference>
<dbReference type="GO" id="GO:0006119">
    <property type="term" value="P:oxidative phosphorylation"/>
    <property type="evidence" value="ECO:0007669"/>
    <property type="project" value="UniProtKB-UniPathway"/>
</dbReference>
<dbReference type="GO" id="GO:0022904">
    <property type="term" value="P:respiratory electron transport chain"/>
    <property type="evidence" value="ECO:0007669"/>
    <property type="project" value="TreeGrafter"/>
</dbReference>
<dbReference type="CDD" id="cd01662">
    <property type="entry name" value="Ubiquinol_Oxidase_I"/>
    <property type="match status" value="1"/>
</dbReference>
<dbReference type="FunFam" id="1.20.210.10:FF:000002">
    <property type="entry name" value="Cytochrome o ubiquinol oxidase, subunit I"/>
    <property type="match status" value="1"/>
</dbReference>
<dbReference type="Gene3D" id="1.20.210.10">
    <property type="entry name" value="Cytochrome c oxidase-like, subunit I domain"/>
    <property type="match status" value="1"/>
</dbReference>
<dbReference type="InterPro" id="IPR023616">
    <property type="entry name" value="Cyt_c_oxase-like_su1_dom"/>
</dbReference>
<dbReference type="InterPro" id="IPR036927">
    <property type="entry name" value="Cyt_c_oxase-like_su1_sf"/>
</dbReference>
<dbReference type="InterPro" id="IPR000883">
    <property type="entry name" value="Cyt_C_Oxase_1"/>
</dbReference>
<dbReference type="InterPro" id="IPR023615">
    <property type="entry name" value="Cyt_c_Oxase_su1_BS"/>
</dbReference>
<dbReference type="InterPro" id="IPR014233">
    <property type="entry name" value="QoxB"/>
</dbReference>
<dbReference type="NCBIfam" id="TIGR02882">
    <property type="entry name" value="QoxB"/>
    <property type="match status" value="1"/>
</dbReference>
<dbReference type="PANTHER" id="PTHR10422:SF35">
    <property type="entry name" value="CYTOCHROME BO(3) UBIQUINOL OXIDASE SUBUNIT 1"/>
    <property type="match status" value="1"/>
</dbReference>
<dbReference type="PANTHER" id="PTHR10422">
    <property type="entry name" value="CYTOCHROME C OXIDASE SUBUNIT 1"/>
    <property type="match status" value="1"/>
</dbReference>
<dbReference type="Pfam" id="PF00115">
    <property type="entry name" value="COX1"/>
    <property type="match status" value="1"/>
</dbReference>
<dbReference type="PRINTS" id="PR01165">
    <property type="entry name" value="CYCOXIDASEI"/>
</dbReference>
<dbReference type="SUPFAM" id="SSF81442">
    <property type="entry name" value="Cytochrome c oxidase subunit I-like"/>
    <property type="match status" value="1"/>
</dbReference>
<dbReference type="PROSITE" id="PS50855">
    <property type="entry name" value="COX1"/>
    <property type="match status" value="1"/>
</dbReference>
<dbReference type="PROSITE" id="PS00077">
    <property type="entry name" value="COX1_CUB"/>
    <property type="match status" value="1"/>
</dbReference>
<name>QOX1_STAAS</name>
<comment type="function">
    <text evidence="1">Catalyzes quinol oxidation with the concomitant reduction of oxygen to water.</text>
</comment>
<comment type="catalytic activity">
    <reaction>
        <text>2 a quinol + O2 = 2 a quinone + 2 H2O</text>
        <dbReference type="Rhea" id="RHEA:55376"/>
        <dbReference type="ChEBI" id="CHEBI:15377"/>
        <dbReference type="ChEBI" id="CHEBI:15379"/>
        <dbReference type="ChEBI" id="CHEBI:24646"/>
        <dbReference type="ChEBI" id="CHEBI:132124"/>
    </reaction>
</comment>
<comment type="cofactor">
    <cofactor evidence="1">
        <name>Cu cation</name>
        <dbReference type="ChEBI" id="CHEBI:23378"/>
    </cofactor>
    <text evidence="1">Binds a copper B center.</text>
</comment>
<comment type="cofactor">
    <cofactor evidence="1">
        <name>ferriheme a</name>
        <dbReference type="ChEBI" id="CHEBI:60532"/>
    </cofactor>
</comment>
<comment type="cofactor">
    <text evidence="1">Heme A3.</text>
</comment>
<comment type="pathway">
    <text>Energy metabolism; oxidative phosphorylation.</text>
</comment>
<comment type="subcellular location">
    <subcellularLocation>
        <location evidence="1">Cell membrane</location>
        <topology evidence="1">Multi-pass membrane protein</topology>
    </subcellularLocation>
</comment>
<comment type="similarity">
    <text evidence="3">Belongs to the heme-copper respiratory oxidase family.</text>
</comment>
<feature type="chain" id="PRO_0000276744" description="Probable quinol oxidase subunit 1">
    <location>
        <begin position="1"/>
        <end position="662"/>
    </location>
</feature>
<feature type="transmembrane region" description="Helical" evidence="2">
    <location>
        <begin position="14"/>
        <end position="34"/>
    </location>
</feature>
<feature type="transmembrane region" description="Helical" evidence="2">
    <location>
        <begin position="58"/>
        <end position="78"/>
    </location>
</feature>
<feature type="transmembrane region" description="Helical" evidence="2">
    <location>
        <begin position="103"/>
        <end position="123"/>
    </location>
</feature>
<feature type="transmembrane region" description="Helical" evidence="2">
    <location>
        <begin position="140"/>
        <end position="160"/>
    </location>
</feature>
<feature type="transmembrane region" description="Helical" evidence="2">
    <location>
        <begin position="187"/>
        <end position="207"/>
    </location>
</feature>
<feature type="transmembrane region" description="Helical" evidence="2">
    <location>
        <begin position="228"/>
        <end position="248"/>
    </location>
</feature>
<feature type="transmembrane region" description="Helical" evidence="2">
    <location>
        <begin position="273"/>
        <end position="293"/>
    </location>
</feature>
<feature type="transmembrane region" description="Helical" evidence="2">
    <location>
        <begin position="311"/>
        <end position="331"/>
    </location>
</feature>
<feature type="transmembrane region" description="Helical" evidence="2">
    <location>
        <begin position="336"/>
        <end position="356"/>
    </location>
</feature>
<feature type="transmembrane region" description="Helical" evidence="2">
    <location>
        <begin position="376"/>
        <end position="396"/>
    </location>
</feature>
<feature type="transmembrane region" description="Helical" evidence="2">
    <location>
        <begin position="415"/>
        <end position="435"/>
    </location>
</feature>
<feature type="transmembrane region" description="Helical" evidence="2">
    <location>
        <begin position="451"/>
        <end position="471"/>
    </location>
</feature>
<feature type="transmembrane region" description="Helical" evidence="2">
    <location>
        <begin position="493"/>
        <end position="513"/>
    </location>
</feature>
<feature type="transmembrane region" description="Helical" evidence="2">
    <location>
        <begin position="587"/>
        <end position="604"/>
    </location>
</feature>
<feature type="transmembrane region" description="Helical" evidence="2">
    <location>
        <begin position="608"/>
        <end position="627"/>
    </location>
</feature>
<feature type="binding site" description="axial binding residue" evidence="1">
    <location>
        <position position="102"/>
    </location>
    <ligand>
        <name>Fe(II)-heme a</name>
        <dbReference type="ChEBI" id="CHEBI:61715"/>
    </ligand>
    <ligandPart>
        <name>Fe</name>
        <dbReference type="ChEBI" id="CHEBI:18248"/>
    </ligandPart>
</feature>
<feature type="binding site" evidence="1">
    <location>
        <position position="279"/>
    </location>
    <ligand>
        <name>Cu cation</name>
        <dbReference type="ChEBI" id="CHEBI:23378"/>
        <label>B</label>
    </ligand>
</feature>
<feature type="binding site" evidence="1">
    <location>
        <position position="283"/>
    </location>
    <ligand>
        <name>Cu cation</name>
        <dbReference type="ChEBI" id="CHEBI:23378"/>
        <label>B</label>
    </ligand>
</feature>
<feature type="binding site" evidence="1">
    <location>
        <position position="328"/>
    </location>
    <ligand>
        <name>Cu cation</name>
        <dbReference type="ChEBI" id="CHEBI:23378"/>
        <label>B</label>
    </ligand>
</feature>
<feature type="binding site" evidence="1">
    <location>
        <position position="329"/>
    </location>
    <ligand>
        <name>Cu cation</name>
        <dbReference type="ChEBI" id="CHEBI:23378"/>
        <label>B</label>
    </ligand>
</feature>
<feature type="binding site" description="axial binding residue" evidence="1">
    <location>
        <position position="414"/>
    </location>
    <ligand>
        <name>heme a3</name>
        <dbReference type="ChEBI" id="CHEBI:83282"/>
    </ligand>
    <ligandPart>
        <name>Fe</name>
        <dbReference type="ChEBI" id="CHEBI:18248"/>
    </ligandPart>
</feature>
<feature type="binding site" description="axial binding residue" evidence="1">
    <location>
        <position position="416"/>
    </location>
    <ligand>
        <name>Fe(II)-heme a</name>
        <dbReference type="ChEBI" id="CHEBI:61715"/>
    </ligand>
    <ligandPart>
        <name>Fe</name>
        <dbReference type="ChEBI" id="CHEBI:18248"/>
    </ligandPart>
</feature>
<feature type="cross-link" description="1'-histidyl-3'-tyrosine (His-Tyr)" evidence="1">
    <location>
        <begin position="279"/>
        <end position="283"/>
    </location>
</feature>
<accession>Q6GAF3</accession>
<reference key="1">
    <citation type="journal article" date="2004" name="Proc. Natl. Acad. Sci. U.S.A.">
        <title>Complete genomes of two clinical Staphylococcus aureus strains: evidence for the rapid evolution of virulence and drug resistance.</title>
        <authorList>
            <person name="Holden M.T.G."/>
            <person name="Feil E.J."/>
            <person name="Lindsay J.A."/>
            <person name="Peacock S.J."/>
            <person name="Day N.P.J."/>
            <person name="Enright M.C."/>
            <person name="Foster T.J."/>
            <person name="Moore C.E."/>
            <person name="Hurst L."/>
            <person name="Atkin R."/>
            <person name="Barron A."/>
            <person name="Bason N."/>
            <person name="Bentley S.D."/>
            <person name="Chillingworth C."/>
            <person name="Chillingworth T."/>
            <person name="Churcher C."/>
            <person name="Clark L."/>
            <person name="Corton C."/>
            <person name="Cronin A."/>
            <person name="Doggett J."/>
            <person name="Dowd L."/>
            <person name="Feltwell T."/>
            <person name="Hance Z."/>
            <person name="Harris B."/>
            <person name="Hauser H."/>
            <person name="Holroyd S."/>
            <person name="Jagels K."/>
            <person name="James K.D."/>
            <person name="Lennard N."/>
            <person name="Line A."/>
            <person name="Mayes R."/>
            <person name="Moule S."/>
            <person name="Mungall K."/>
            <person name="Ormond D."/>
            <person name="Quail M.A."/>
            <person name="Rabbinowitsch E."/>
            <person name="Rutherford K.M."/>
            <person name="Sanders M."/>
            <person name="Sharp S."/>
            <person name="Simmonds M."/>
            <person name="Stevens K."/>
            <person name="Whitehead S."/>
            <person name="Barrell B.G."/>
            <person name="Spratt B.G."/>
            <person name="Parkhill J."/>
        </authorList>
    </citation>
    <scope>NUCLEOTIDE SEQUENCE [LARGE SCALE GENOMIC DNA]</scope>
    <source>
        <strain>MSSA476</strain>
    </source>
</reference>